<organism>
    <name type="scientific">Shouchella clausii (strain KSM-K16)</name>
    <name type="common">Alkalihalobacillus clausii</name>
    <dbReference type="NCBI Taxonomy" id="66692"/>
    <lineage>
        <taxon>Bacteria</taxon>
        <taxon>Bacillati</taxon>
        <taxon>Bacillota</taxon>
        <taxon>Bacilli</taxon>
        <taxon>Bacillales</taxon>
        <taxon>Bacillaceae</taxon>
        <taxon>Shouchella</taxon>
    </lineage>
</organism>
<feature type="chain" id="PRO_0000272423" description="Phosphate import ATP-binding protein PstB 1">
    <location>
        <begin position="1"/>
        <end position="260"/>
    </location>
</feature>
<feature type="domain" description="ABC transporter" evidence="1">
    <location>
        <begin position="8"/>
        <end position="255"/>
    </location>
</feature>
<feature type="binding site" evidence="1">
    <location>
        <begin position="46"/>
        <end position="53"/>
    </location>
    <ligand>
        <name>ATP</name>
        <dbReference type="ChEBI" id="CHEBI:30616"/>
    </ligand>
</feature>
<reference key="1">
    <citation type="submission" date="2003-10" db="EMBL/GenBank/DDBJ databases">
        <title>The complete genome sequence of the alkaliphilic Bacillus clausii KSM-K16.</title>
        <authorList>
            <person name="Takaki Y."/>
            <person name="Kageyama Y."/>
            <person name="Shimamura S."/>
            <person name="Suzuki H."/>
            <person name="Nishi S."/>
            <person name="Hatada Y."/>
            <person name="Kawai S."/>
            <person name="Ito S."/>
            <person name="Horikoshi K."/>
        </authorList>
    </citation>
    <scope>NUCLEOTIDE SEQUENCE [LARGE SCALE GENOMIC DNA]</scope>
    <source>
        <strain>KSM-K16</strain>
    </source>
</reference>
<keyword id="KW-0067">ATP-binding</keyword>
<keyword id="KW-1003">Cell membrane</keyword>
<keyword id="KW-0472">Membrane</keyword>
<keyword id="KW-0547">Nucleotide-binding</keyword>
<keyword id="KW-0592">Phosphate transport</keyword>
<keyword id="KW-1185">Reference proteome</keyword>
<keyword id="KW-1278">Translocase</keyword>
<keyword id="KW-0813">Transport</keyword>
<sequence length="260" mass="29242">MQALAEQTETKNVYDVLDFNLWYGNNQALKNISLQLKEKHVTAIIGPSGCGKSTFIKTLNLMSRLNPDIRMAGELNFRGENLLTTSMDLAELRKAVGMVFQKPNPFPKSIYENVAYGPRIHGIRKKKELDEIVESSLKGAFLWEEVKDRLNKNALSLSGGQQQRLCIARALATKPEVLLMDEPTSALDPISTTKVEELITSLRDSYTIVIVTHNMQQAARISDETAFFYMGELVEIGPTQRIFSNPEHKRTEDYVSGQFG</sequence>
<name>PSTB1_SHOC1</name>
<comment type="function">
    <text evidence="1">Part of the ABC transporter complex PstSACB involved in phosphate import. Responsible for energy coupling to the transport system.</text>
</comment>
<comment type="catalytic activity">
    <reaction evidence="1">
        <text>phosphate(out) + ATP + H2O = ADP + 2 phosphate(in) + H(+)</text>
        <dbReference type="Rhea" id="RHEA:24440"/>
        <dbReference type="ChEBI" id="CHEBI:15377"/>
        <dbReference type="ChEBI" id="CHEBI:15378"/>
        <dbReference type="ChEBI" id="CHEBI:30616"/>
        <dbReference type="ChEBI" id="CHEBI:43474"/>
        <dbReference type="ChEBI" id="CHEBI:456216"/>
        <dbReference type="EC" id="7.3.2.1"/>
    </reaction>
</comment>
<comment type="subunit">
    <text evidence="1">The complex is composed of two ATP-binding proteins (PstB), two transmembrane proteins (PstC and PstA) and a solute-binding protein (PstS).</text>
</comment>
<comment type="subcellular location">
    <subcellularLocation>
        <location evidence="1">Cell membrane</location>
        <topology evidence="1">Peripheral membrane protein</topology>
    </subcellularLocation>
</comment>
<comment type="similarity">
    <text evidence="1">Belongs to the ABC transporter superfamily. Phosphate importer (TC 3.A.1.7) family.</text>
</comment>
<evidence type="ECO:0000255" key="1">
    <source>
        <dbReference type="HAMAP-Rule" id="MF_01702"/>
    </source>
</evidence>
<dbReference type="EC" id="7.3.2.1" evidence="1"/>
<dbReference type="EMBL" id="AP006627">
    <property type="protein sequence ID" value="BAD65122.1"/>
    <property type="molecule type" value="Genomic_DNA"/>
</dbReference>
<dbReference type="SMR" id="Q5WET8"/>
<dbReference type="STRING" id="66692.ABC2587"/>
<dbReference type="KEGG" id="bcl:ABC2587"/>
<dbReference type="eggNOG" id="COG1117">
    <property type="taxonomic scope" value="Bacteria"/>
</dbReference>
<dbReference type="HOGENOM" id="CLU_000604_1_22_9"/>
<dbReference type="OrthoDB" id="9802185at2"/>
<dbReference type="Proteomes" id="UP000001168">
    <property type="component" value="Chromosome"/>
</dbReference>
<dbReference type="GO" id="GO:0005886">
    <property type="term" value="C:plasma membrane"/>
    <property type="evidence" value="ECO:0007669"/>
    <property type="project" value="UniProtKB-SubCell"/>
</dbReference>
<dbReference type="GO" id="GO:0005524">
    <property type="term" value="F:ATP binding"/>
    <property type="evidence" value="ECO:0007669"/>
    <property type="project" value="UniProtKB-KW"/>
</dbReference>
<dbReference type="GO" id="GO:0016887">
    <property type="term" value="F:ATP hydrolysis activity"/>
    <property type="evidence" value="ECO:0007669"/>
    <property type="project" value="InterPro"/>
</dbReference>
<dbReference type="GO" id="GO:0015415">
    <property type="term" value="F:ATPase-coupled phosphate ion transmembrane transporter activity"/>
    <property type="evidence" value="ECO:0007669"/>
    <property type="project" value="UniProtKB-EC"/>
</dbReference>
<dbReference type="GO" id="GO:0035435">
    <property type="term" value="P:phosphate ion transmembrane transport"/>
    <property type="evidence" value="ECO:0007669"/>
    <property type="project" value="InterPro"/>
</dbReference>
<dbReference type="CDD" id="cd03260">
    <property type="entry name" value="ABC_PstB_phosphate_transporter"/>
    <property type="match status" value="1"/>
</dbReference>
<dbReference type="Gene3D" id="3.40.50.300">
    <property type="entry name" value="P-loop containing nucleotide triphosphate hydrolases"/>
    <property type="match status" value="1"/>
</dbReference>
<dbReference type="InterPro" id="IPR003593">
    <property type="entry name" value="AAA+_ATPase"/>
</dbReference>
<dbReference type="InterPro" id="IPR003439">
    <property type="entry name" value="ABC_transporter-like_ATP-bd"/>
</dbReference>
<dbReference type="InterPro" id="IPR017871">
    <property type="entry name" value="ABC_transporter-like_CS"/>
</dbReference>
<dbReference type="InterPro" id="IPR027417">
    <property type="entry name" value="P-loop_NTPase"/>
</dbReference>
<dbReference type="InterPro" id="IPR005670">
    <property type="entry name" value="PstB-like"/>
</dbReference>
<dbReference type="NCBIfam" id="TIGR00972">
    <property type="entry name" value="3a0107s01c2"/>
    <property type="match status" value="1"/>
</dbReference>
<dbReference type="PANTHER" id="PTHR43423">
    <property type="entry name" value="ABC TRANSPORTER I FAMILY MEMBER 17"/>
    <property type="match status" value="1"/>
</dbReference>
<dbReference type="PANTHER" id="PTHR43423:SF1">
    <property type="entry name" value="ABC TRANSPORTER I FAMILY MEMBER 17"/>
    <property type="match status" value="1"/>
</dbReference>
<dbReference type="Pfam" id="PF00005">
    <property type="entry name" value="ABC_tran"/>
    <property type="match status" value="1"/>
</dbReference>
<dbReference type="SMART" id="SM00382">
    <property type="entry name" value="AAA"/>
    <property type="match status" value="1"/>
</dbReference>
<dbReference type="SUPFAM" id="SSF52540">
    <property type="entry name" value="P-loop containing nucleoside triphosphate hydrolases"/>
    <property type="match status" value="1"/>
</dbReference>
<dbReference type="PROSITE" id="PS00211">
    <property type="entry name" value="ABC_TRANSPORTER_1"/>
    <property type="match status" value="1"/>
</dbReference>
<dbReference type="PROSITE" id="PS50893">
    <property type="entry name" value="ABC_TRANSPORTER_2"/>
    <property type="match status" value="1"/>
</dbReference>
<dbReference type="PROSITE" id="PS51238">
    <property type="entry name" value="PSTB"/>
    <property type="match status" value="1"/>
</dbReference>
<proteinExistence type="inferred from homology"/>
<gene>
    <name evidence="1" type="primary">pstB1</name>
    <name type="ordered locus">ABC2587</name>
</gene>
<protein>
    <recommendedName>
        <fullName evidence="1">Phosphate import ATP-binding protein PstB 1</fullName>
        <ecNumber evidence="1">7.3.2.1</ecNumber>
    </recommendedName>
    <alternativeName>
        <fullName evidence="1">ABC phosphate transporter 1</fullName>
    </alternativeName>
    <alternativeName>
        <fullName evidence="1">Phosphate-transporting ATPase 1</fullName>
    </alternativeName>
</protein>
<accession>Q5WET8</accession>